<evidence type="ECO:0000255" key="1">
    <source>
        <dbReference type="HAMAP-Rule" id="MF_01603"/>
    </source>
</evidence>
<organism>
    <name type="scientific">Gluconacetobacter diazotrophicus (strain ATCC 49037 / DSM 5601 / CCUG 37298 / CIP 103539 / LMG 7603 / PAl5)</name>
    <dbReference type="NCBI Taxonomy" id="272568"/>
    <lineage>
        <taxon>Bacteria</taxon>
        <taxon>Pseudomonadati</taxon>
        <taxon>Pseudomonadota</taxon>
        <taxon>Alphaproteobacteria</taxon>
        <taxon>Acetobacterales</taxon>
        <taxon>Acetobacteraceae</taxon>
        <taxon>Gluconacetobacter</taxon>
    </lineage>
</organism>
<reference key="1">
    <citation type="journal article" date="2009" name="BMC Genomics">
        <title>Complete genome sequence of the sugarcane nitrogen-fixing endophyte Gluconacetobacter diazotrophicus Pal5.</title>
        <authorList>
            <person name="Bertalan M."/>
            <person name="Albano R."/>
            <person name="de Padua V."/>
            <person name="Rouws L."/>
            <person name="Rojas C."/>
            <person name="Hemerly A."/>
            <person name="Teixeira K."/>
            <person name="Schwab S."/>
            <person name="Araujo J."/>
            <person name="Oliveira A."/>
            <person name="Franca L."/>
            <person name="Magalhaes V."/>
            <person name="Alqueres S."/>
            <person name="Cardoso A."/>
            <person name="Almeida W."/>
            <person name="Loureiro M.M."/>
            <person name="Nogueira E."/>
            <person name="Cidade D."/>
            <person name="Oliveira D."/>
            <person name="Simao T."/>
            <person name="Macedo J."/>
            <person name="Valadao A."/>
            <person name="Dreschsel M."/>
            <person name="Freitas F."/>
            <person name="Vidal M."/>
            <person name="Guedes H."/>
            <person name="Rodrigues E."/>
            <person name="Meneses C."/>
            <person name="Brioso P."/>
            <person name="Pozzer L."/>
            <person name="Figueiredo D."/>
            <person name="Montano H."/>
            <person name="Junior J."/>
            <person name="de Souza Filho G."/>
            <person name="Martin Quintana Flores V."/>
            <person name="Ferreira B."/>
            <person name="Branco A."/>
            <person name="Gonzalez P."/>
            <person name="Guillobel H."/>
            <person name="Lemos M."/>
            <person name="Seibel L."/>
            <person name="Macedo J."/>
            <person name="Alves-Ferreira M."/>
            <person name="Sachetto-Martins G."/>
            <person name="Coelho A."/>
            <person name="Santos E."/>
            <person name="Amaral G."/>
            <person name="Neves A."/>
            <person name="Pacheco A.B."/>
            <person name="Carvalho D."/>
            <person name="Lery L."/>
            <person name="Bisch P."/>
            <person name="Rossle S.C."/>
            <person name="Urmenyi T."/>
            <person name="Rael Pereira A."/>
            <person name="Silva R."/>
            <person name="Rondinelli E."/>
            <person name="von Kruger W."/>
            <person name="Martins O."/>
            <person name="Baldani J.I."/>
            <person name="Ferreira P.C."/>
        </authorList>
    </citation>
    <scope>NUCLEOTIDE SEQUENCE [LARGE SCALE GENOMIC DNA]</scope>
    <source>
        <strain>ATCC 49037 / DSM 5601 / CCUG 37298 / CIP 103539 / LMG 7603 / PAl5</strain>
    </source>
</reference>
<reference key="2">
    <citation type="journal article" date="2010" name="Stand. Genomic Sci.">
        <title>Two genome sequences of the same bacterial strain, Gluconacetobacter diazotrophicus PAl 5, suggest a new standard in genome sequence submission.</title>
        <authorList>
            <person name="Giongo A."/>
            <person name="Tyler H.L."/>
            <person name="Zipperer U.N."/>
            <person name="Triplett E.W."/>
        </authorList>
    </citation>
    <scope>NUCLEOTIDE SEQUENCE [LARGE SCALE GENOMIC DNA]</scope>
    <source>
        <strain>ATCC 49037 / DSM 5601 / CCUG 37298 / CIP 103539 / LMG 7603 / PAl5</strain>
    </source>
</reference>
<accession>A9HDB1</accession>
<accession>B5ZLS9</accession>
<sequence>MDFSSITVLCIGDIMLDRFVYGEMERISPEAPVPVLRLGRTREMPGGVGNVANNILSLGGRAILVGLVGRDTPGQALRGLLGQRPGLTDALVETGARPTICKTRFIAANQQVVRADEESRLALQPDEATSLIAAIDAHIGAADIVVLSDYAKGTCADPVIAHAIATARARGIAVFVDPKSRDFARYRGASCITPNARELAQATGLPIDTDAEIEQAARAAMARADAVAILATRSEKGMALVEREGGVQIVPARAREVFDVSGAGDTVIAALALAAGSGMTLAQAMHVANAAAGVVVGKLGTATADIAEVLAELNAQDADAMGGTPSLLSRAQAAEQVARWKAQGLRVGFTNGCFDIIHPGHVALLAAARRACDRLIVALNDDASVARLKGPERPVNPLEDRARVMAAIRHVDAVVAFGEDTPLELIRLLLPDVLVKGADYRPDQVVGADVVRQAGGRVVLADLEDGKSTTRTIGRIRAAGAADR</sequence>
<comment type="function">
    <text evidence="1">Catalyzes the phosphorylation of D-glycero-D-manno-heptose 7-phosphate at the C-1 position to selectively form D-glycero-beta-D-manno-heptose-1,7-bisphosphate.</text>
</comment>
<comment type="function">
    <text evidence="1">Catalyzes the ADP transfer from ATP to D-glycero-beta-D-manno-heptose 1-phosphate, yielding ADP-D-glycero-beta-D-manno-heptose.</text>
</comment>
<comment type="catalytic activity">
    <reaction evidence="1">
        <text>D-glycero-beta-D-manno-heptose 7-phosphate + ATP = D-glycero-beta-D-manno-heptose 1,7-bisphosphate + ADP + H(+)</text>
        <dbReference type="Rhea" id="RHEA:27473"/>
        <dbReference type="ChEBI" id="CHEBI:15378"/>
        <dbReference type="ChEBI" id="CHEBI:30616"/>
        <dbReference type="ChEBI" id="CHEBI:60204"/>
        <dbReference type="ChEBI" id="CHEBI:60208"/>
        <dbReference type="ChEBI" id="CHEBI:456216"/>
        <dbReference type="EC" id="2.7.1.167"/>
    </reaction>
</comment>
<comment type="catalytic activity">
    <reaction evidence="1">
        <text>D-glycero-beta-D-manno-heptose 1-phosphate + ATP + H(+) = ADP-D-glycero-beta-D-manno-heptose + diphosphate</text>
        <dbReference type="Rhea" id="RHEA:27465"/>
        <dbReference type="ChEBI" id="CHEBI:15378"/>
        <dbReference type="ChEBI" id="CHEBI:30616"/>
        <dbReference type="ChEBI" id="CHEBI:33019"/>
        <dbReference type="ChEBI" id="CHEBI:59967"/>
        <dbReference type="ChEBI" id="CHEBI:61593"/>
        <dbReference type="EC" id="2.7.7.70"/>
    </reaction>
</comment>
<comment type="pathway">
    <text evidence="1">Nucleotide-sugar biosynthesis; ADP-L-glycero-beta-D-manno-heptose biosynthesis; ADP-L-glycero-beta-D-manno-heptose from D-glycero-beta-D-manno-heptose 7-phosphate: step 1/4.</text>
</comment>
<comment type="pathway">
    <text evidence="1">Nucleotide-sugar biosynthesis; ADP-L-glycero-beta-D-manno-heptose biosynthesis; ADP-L-glycero-beta-D-manno-heptose from D-glycero-beta-D-manno-heptose 7-phosphate: step 3/4.</text>
</comment>
<comment type="subunit">
    <text evidence="1">Homodimer.</text>
</comment>
<comment type="similarity">
    <text evidence="1">In the N-terminal section; belongs to the carbohydrate kinase PfkB family.</text>
</comment>
<comment type="similarity">
    <text evidence="1">In the C-terminal section; belongs to the cytidylyltransferase family.</text>
</comment>
<name>HLDE_GLUDA</name>
<dbReference type="EC" id="2.7.1.167" evidence="1"/>
<dbReference type="EC" id="2.7.7.70" evidence="1"/>
<dbReference type="EMBL" id="AM889285">
    <property type="protein sequence ID" value="CAP55076.1"/>
    <property type="molecule type" value="Genomic_DNA"/>
</dbReference>
<dbReference type="EMBL" id="CP001189">
    <property type="protein sequence ID" value="ACI51606.1"/>
    <property type="molecule type" value="Genomic_DNA"/>
</dbReference>
<dbReference type="RefSeq" id="WP_012224197.1">
    <property type="nucleotide sequence ID" value="NC_010125.1"/>
</dbReference>
<dbReference type="SMR" id="A9HDB1"/>
<dbReference type="STRING" id="272568.GDI1133"/>
<dbReference type="KEGG" id="gdi:GDI1133"/>
<dbReference type="KEGG" id="gdj:Gdia_1846"/>
<dbReference type="eggNOG" id="COG0615">
    <property type="taxonomic scope" value="Bacteria"/>
</dbReference>
<dbReference type="eggNOG" id="COG2870">
    <property type="taxonomic scope" value="Bacteria"/>
</dbReference>
<dbReference type="HOGENOM" id="CLU_021150_2_1_5"/>
<dbReference type="OrthoDB" id="9802794at2"/>
<dbReference type="UniPathway" id="UPA00356">
    <property type="reaction ID" value="UER00437"/>
</dbReference>
<dbReference type="UniPathway" id="UPA00356">
    <property type="reaction ID" value="UER00439"/>
</dbReference>
<dbReference type="Proteomes" id="UP000001176">
    <property type="component" value="Chromosome"/>
</dbReference>
<dbReference type="GO" id="GO:0005829">
    <property type="term" value="C:cytosol"/>
    <property type="evidence" value="ECO:0007669"/>
    <property type="project" value="TreeGrafter"/>
</dbReference>
<dbReference type="GO" id="GO:0005524">
    <property type="term" value="F:ATP binding"/>
    <property type="evidence" value="ECO:0007669"/>
    <property type="project" value="UniProtKB-UniRule"/>
</dbReference>
<dbReference type="GO" id="GO:0033785">
    <property type="term" value="F:heptose 7-phosphate kinase activity"/>
    <property type="evidence" value="ECO:0007669"/>
    <property type="project" value="UniProtKB-UniRule"/>
</dbReference>
<dbReference type="GO" id="GO:0033786">
    <property type="term" value="F:heptose-1-phosphate adenylyltransferase activity"/>
    <property type="evidence" value="ECO:0007669"/>
    <property type="project" value="UniProtKB-UniRule"/>
</dbReference>
<dbReference type="GO" id="GO:0016773">
    <property type="term" value="F:phosphotransferase activity, alcohol group as acceptor"/>
    <property type="evidence" value="ECO:0007669"/>
    <property type="project" value="InterPro"/>
</dbReference>
<dbReference type="GO" id="GO:0097171">
    <property type="term" value="P:ADP-L-glycero-beta-D-manno-heptose biosynthetic process"/>
    <property type="evidence" value="ECO:0007669"/>
    <property type="project" value="UniProtKB-UniPathway"/>
</dbReference>
<dbReference type="CDD" id="cd01172">
    <property type="entry name" value="RfaE_like"/>
    <property type="match status" value="1"/>
</dbReference>
<dbReference type="FunFam" id="3.40.1190.20:FF:000002">
    <property type="entry name" value="Bifunctional protein HldE"/>
    <property type="match status" value="1"/>
</dbReference>
<dbReference type="Gene3D" id="3.40.1190.20">
    <property type="match status" value="1"/>
</dbReference>
<dbReference type="Gene3D" id="3.40.50.620">
    <property type="entry name" value="HUPs"/>
    <property type="match status" value="1"/>
</dbReference>
<dbReference type="HAMAP" id="MF_01603">
    <property type="entry name" value="HldE"/>
    <property type="match status" value="1"/>
</dbReference>
<dbReference type="InterPro" id="IPR023030">
    <property type="entry name" value="Bifunc_HldE"/>
</dbReference>
<dbReference type="InterPro" id="IPR002173">
    <property type="entry name" value="Carboh/pur_kinase_PfkB_CS"/>
</dbReference>
<dbReference type="InterPro" id="IPR004821">
    <property type="entry name" value="Cyt_trans-like"/>
</dbReference>
<dbReference type="InterPro" id="IPR011611">
    <property type="entry name" value="PfkB_dom"/>
</dbReference>
<dbReference type="InterPro" id="IPR011913">
    <property type="entry name" value="RfaE_dom_I"/>
</dbReference>
<dbReference type="InterPro" id="IPR011914">
    <property type="entry name" value="RfaE_dom_II"/>
</dbReference>
<dbReference type="InterPro" id="IPR029056">
    <property type="entry name" value="Ribokinase-like"/>
</dbReference>
<dbReference type="InterPro" id="IPR014729">
    <property type="entry name" value="Rossmann-like_a/b/a_fold"/>
</dbReference>
<dbReference type="NCBIfam" id="TIGR00125">
    <property type="entry name" value="cyt_tran_rel"/>
    <property type="match status" value="1"/>
</dbReference>
<dbReference type="NCBIfam" id="TIGR02198">
    <property type="entry name" value="rfaE_dom_I"/>
    <property type="match status" value="1"/>
</dbReference>
<dbReference type="NCBIfam" id="TIGR02199">
    <property type="entry name" value="rfaE_dom_II"/>
    <property type="match status" value="1"/>
</dbReference>
<dbReference type="PANTHER" id="PTHR46969">
    <property type="entry name" value="BIFUNCTIONAL PROTEIN HLDE"/>
    <property type="match status" value="1"/>
</dbReference>
<dbReference type="PANTHER" id="PTHR46969:SF1">
    <property type="entry name" value="BIFUNCTIONAL PROTEIN HLDE"/>
    <property type="match status" value="1"/>
</dbReference>
<dbReference type="Pfam" id="PF01467">
    <property type="entry name" value="CTP_transf_like"/>
    <property type="match status" value="1"/>
</dbReference>
<dbReference type="Pfam" id="PF00294">
    <property type="entry name" value="PfkB"/>
    <property type="match status" value="1"/>
</dbReference>
<dbReference type="SUPFAM" id="SSF52374">
    <property type="entry name" value="Nucleotidylyl transferase"/>
    <property type="match status" value="1"/>
</dbReference>
<dbReference type="SUPFAM" id="SSF53613">
    <property type="entry name" value="Ribokinase-like"/>
    <property type="match status" value="1"/>
</dbReference>
<dbReference type="PROSITE" id="PS00584">
    <property type="entry name" value="PFKB_KINASES_2"/>
    <property type="match status" value="1"/>
</dbReference>
<gene>
    <name evidence="1" type="primary">hldE</name>
    <name type="ordered locus">GDI1133</name>
    <name type="ordered locus">Gdia_1846</name>
</gene>
<feature type="chain" id="PRO_1000088022" description="Bifunctional protein HldE">
    <location>
        <begin position="1"/>
        <end position="484"/>
    </location>
</feature>
<feature type="region of interest" description="Ribokinase">
    <location>
        <begin position="1"/>
        <end position="320"/>
    </location>
</feature>
<feature type="region of interest" description="Cytidylyltransferase">
    <location>
        <begin position="349"/>
        <end position="484"/>
    </location>
</feature>
<feature type="active site" evidence="1">
    <location>
        <position position="265"/>
    </location>
</feature>
<feature type="binding site" evidence="1">
    <location>
        <begin position="195"/>
        <end position="198"/>
    </location>
    <ligand>
        <name>ATP</name>
        <dbReference type="ChEBI" id="CHEBI:30616"/>
    </ligand>
</feature>
<keyword id="KW-0067">ATP-binding</keyword>
<keyword id="KW-0119">Carbohydrate metabolism</keyword>
<keyword id="KW-0418">Kinase</keyword>
<keyword id="KW-0511">Multifunctional enzyme</keyword>
<keyword id="KW-0547">Nucleotide-binding</keyword>
<keyword id="KW-0548">Nucleotidyltransferase</keyword>
<keyword id="KW-1185">Reference proteome</keyword>
<keyword id="KW-0808">Transferase</keyword>
<proteinExistence type="inferred from homology"/>
<protein>
    <recommendedName>
        <fullName evidence="1">Bifunctional protein HldE</fullName>
    </recommendedName>
    <domain>
        <recommendedName>
            <fullName evidence="1">D-beta-D-heptose 7-phosphate kinase</fullName>
            <ecNumber evidence="1">2.7.1.167</ecNumber>
        </recommendedName>
        <alternativeName>
            <fullName evidence="1">D-beta-D-heptose 7-phosphotransferase</fullName>
        </alternativeName>
        <alternativeName>
            <fullName evidence="1">D-glycero-beta-D-manno-heptose-7-phosphate kinase</fullName>
        </alternativeName>
    </domain>
    <domain>
        <recommendedName>
            <fullName evidence="1">D-beta-D-heptose 1-phosphate adenylyltransferase</fullName>
            <ecNumber evidence="1">2.7.7.70</ecNumber>
        </recommendedName>
        <alternativeName>
            <fullName evidence="1">D-glycero-beta-D-manno-heptose 1-phosphate adenylyltransferase</fullName>
        </alternativeName>
    </domain>
</protein>